<proteinExistence type="inferred from homology"/>
<organism>
    <name type="scientific">Escherichia coli O8 (strain IAI1)</name>
    <dbReference type="NCBI Taxonomy" id="585034"/>
    <lineage>
        <taxon>Bacteria</taxon>
        <taxon>Pseudomonadati</taxon>
        <taxon>Pseudomonadota</taxon>
        <taxon>Gammaproteobacteria</taxon>
        <taxon>Enterobacterales</taxon>
        <taxon>Enterobacteriaceae</taxon>
        <taxon>Escherichia</taxon>
    </lineage>
</organism>
<evidence type="ECO:0000255" key="1">
    <source>
        <dbReference type="HAMAP-Rule" id="MF_00578"/>
    </source>
</evidence>
<accession>B7M9D0</accession>
<gene>
    <name evidence="1" type="primary">gshA</name>
    <name type="ordered locus">ECIAI1_2783</name>
</gene>
<feature type="chain" id="PRO_1000129590" description="Glutamate--cysteine ligase">
    <location>
        <begin position="1"/>
        <end position="518"/>
    </location>
</feature>
<comment type="catalytic activity">
    <reaction evidence="1">
        <text>L-cysteine + L-glutamate + ATP = gamma-L-glutamyl-L-cysteine + ADP + phosphate + H(+)</text>
        <dbReference type="Rhea" id="RHEA:13285"/>
        <dbReference type="ChEBI" id="CHEBI:15378"/>
        <dbReference type="ChEBI" id="CHEBI:29985"/>
        <dbReference type="ChEBI" id="CHEBI:30616"/>
        <dbReference type="ChEBI" id="CHEBI:35235"/>
        <dbReference type="ChEBI" id="CHEBI:43474"/>
        <dbReference type="ChEBI" id="CHEBI:58173"/>
        <dbReference type="ChEBI" id="CHEBI:456216"/>
        <dbReference type="EC" id="6.3.2.2"/>
    </reaction>
</comment>
<comment type="pathway">
    <text evidence="1">Sulfur metabolism; glutathione biosynthesis; glutathione from L-cysteine and L-glutamate: step 1/2.</text>
</comment>
<comment type="similarity">
    <text evidence="1">Belongs to the glutamate--cysteine ligase type 1 family. Type 1 subfamily.</text>
</comment>
<reference key="1">
    <citation type="journal article" date="2009" name="PLoS Genet.">
        <title>Organised genome dynamics in the Escherichia coli species results in highly diverse adaptive paths.</title>
        <authorList>
            <person name="Touchon M."/>
            <person name="Hoede C."/>
            <person name="Tenaillon O."/>
            <person name="Barbe V."/>
            <person name="Baeriswyl S."/>
            <person name="Bidet P."/>
            <person name="Bingen E."/>
            <person name="Bonacorsi S."/>
            <person name="Bouchier C."/>
            <person name="Bouvet O."/>
            <person name="Calteau A."/>
            <person name="Chiapello H."/>
            <person name="Clermont O."/>
            <person name="Cruveiller S."/>
            <person name="Danchin A."/>
            <person name="Diard M."/>
            <person name="Dossat C."/>
            <person name="Karoui M.E."/>
            <person name="Frapy E."/>
            <person name="Garry L."/>
            <person name="Ghigo J.M."/>
            <person name="Gilles A.M."/>
            <person name="Johnson J."/>
            <person name="Le Bouguenec C."/>
            <person name="Lescat M."/>
            <person name="Mangenot S."/>
            <person name="Martinez-Jehanne V."/>
            <person name="Matic I."/>
            <person name="Nassif X."/>
            <person name="Oztas S."/>
            <person name="Petit M.A."/>
            <person name="Pichon C."/>
            <person name="Rouy Z."/>
            <person name="Ruf C.S."/>
            <person name="Schneider D."/>
            <person name="Tourret J."/>
            <person name="Vacherie B."/>
            <person name="Vallenet D."/>
            <person name="Medigue C."/>
            <person name="Rocha E.P.C."/>
            <person name="Denamur E."/>
        </authorList>
    </citation>
    <scope>NUCLEOTIDE SEQUENCE [LARGE SCALE GENOMIC DNA]</scope>
    <source>
        <strain>IAI1</strain>
    </source>
</reference>
<keyword id="KW-0067">ATP-binding</keyword>
<keyword id="KW-0317">Glutathione biosynthesis</keyword>
<keyword id="KW-0436">Ligase</keyword>
<keyword id="KW-0547">Nucleotide-binding</keyword>
<protein>
    <recommendedName>
        <fullName evidence="1">Glutamate--cysteine ligase</fullName>
        <ecNumber evidence="1">6.3.2.2</ecNumber>
    </recommendedName>
    <alternativeName>
        <fullName evidence="1">Gamma-ECS</fullName>
        <shortName evidence="1">GCS</shortName>
    </alternativeName>
    <alternativeName>
        <fullName evidence="1">Gamma-glutamylcysteine synthetase</fullName>
    </alternativeName>
</protein>
<name>GSH1_ECO8A</name>
<dbReference type="EC" id="6.3.2.2" evidence="1"/>
<dbReference type="EMBL" id="CU928160">
    <property type="protein sequence ID" value="CAQ99609.1"/>
    <property type="molecule type" value="Genomic_DNA"/>
</dbReference>
<dbReference type="RefSeq" id="WP_000611770.1">
    <property type="nucleotide sequence ID" value="NC_011741.1"/>
</dbReference>
<dbReference type="SMR" id="B7M9D0"/>
<dbReference type="KEGG" id="ecr:ECIAI1_2783"/>
<dbReference type="HOGENOM" id="CLU_020728_3_0_6"/>
<dbReference type="UniPathway" id="UPA00142">
    <property type="reaction ID" value="UER00209"/>
</dbReference>
<dbReference type="GO" id="GO:0005829">
    <property type="term" value="C:cytosol"/>
    <property type="evidence" value="ECO:0007669"/>
    <property type="project" value="TreeGrafter"/>
</dbReference>
<dbReference type="GO" id="GO:0005524">
    <property type="term" value="F:ATP binding"/>
    <property type="evidence" value="ECO:0007669"/>
    <property type="project" value="UniProtKB-KW"/>
</dbReference>
<dbReference type="GO" id="GO:0004357">
    <property type="term" value="F:glutamate-cysteine ligase activity"/>
    <property type="evidence" value="ECO:0007669"/>
    <property type="project" value="UniProtKB-UniRule"/>
</dbReference>
<dbReference type="GO" id="GO:0046872">
    <property type="term" value="F:metal ion binding"/>
    <property type="evidence" value="ECO:0007669"/>
    <property type="project" value="TreeGrafter"/>
</dbReference>
<dbReference type="GO" id="GO:0006750">
    <property type="term" value="P:glutathione biosynthetic process"/>
    <property type="evidence" value="ECO:0007669"/>
    <property type="project" value="UniProtKB-UniRule"/>
</dbReference>
<dbReference type="FunFam" id="3.30.590.20:FF:000001">
    <property type="entry name" value="Glutamate--cysteine ligase"/>
    <property type="match status" value="1"/>
</dbReference>
<dbReference type="Gene3D" id="3.30.590.20">
    <property type="match status" value="1"/>
</dbReference>
<dbReference type="HAMAP" id="MF_00578">
    <property type="entry name" value="Glu_cys_ligase"/>
    <property type="match status" value="1"/>
</dbReference>
<dbReference type="InterPro" id="IPR014746">
    <property type="entry name" value="Gln_synth/guanido_kin_cat_dom"/>
</dbReference>
<dbReference type="InterPro" id="IPR007370">
    <property type="entry name" value="Glu_cys_ligase"/>
</dbReference>
<dbReference type="InterPro" id="IPR006334">
    <property type="entry name" value="Glut_cys_ligase"/>
</dbReference>
<dbReference type="NCBIfam" id="TIGR01434">
    <property type="entry name" value="glu_cys_ligase"/>
    <property type="match status" value="1"/>
</dbReference>
<dbReference type="PANTHER" id="PTHR38761">
    <property type="entry name" value="GLUTAMATE--CYSTEINE LIGASE"/>
    <property type="match status" value="1"/>
</dbReference>
<dbReference type="PANTHER" id="PTHR38761:SF1">
    <property type="entry name" value="GLUTAMATE--CYSTEINE LIGASE"/>
    <property type="match status" value="1"/>
</dbReference>
<dbReference type="Pfam" id="PF04262">
    <property type="entry name" value="Glu_cys_ligase"/>
    <property type="match status" value="1"/>
</dbReference>
<dbReference type="SUPFAM" id="SSF55931">
    <property type="entry name" value="Glutamine synthetase/guanido kinase"/>
    <property type="match status" value="1"/>
</dbReference>
<sequence length="518" mass="58315">MIPDVSQALAWLEKHPQALKGIQRGLERETLRVNADGTLATTGHPEALGSALTHKWITTDFAEALLEFITPVDGDIEHMLTFMRDLHRYTARNMCDERMWPLSMPCYIAEGQDIELAQYGTSNTGRFKTLYREGLKNRYGALMQTISGVHYNFSLPMAFWQAKCGDISGADAKEKISAGYFRVIRNYYRFGWVIPYLFGASPAICSSFLQGKPTSLPFEKTECGMYYLPYATSLRLSDLGYTNKSQSNLGITFNDLYEYVAGLKQAIKTPSEEYAKIGIEKDGKRLQINSNVLQIENELYAPIRPKRVTRSGESPSDALLRGGIEYIEVRSLDINPFSPIGVDEQQVRFLDLFMVWCALADAPEMSSSELACTRVNWNRVILEGRKPGLTLGIGCETAQFPLPQVGKDLFRDLKRVAQTLDSINGGEAYQKVCDELVACFDNPDLTFSARILRSMIDTGIGGTGKAFAEAYRNLLREEPLEILREEDFVAEREASERRQQEMEAADTEPFAVWLEKHA</sequence>